<proteinExistence type="inferred from homology"/>
<name>PMBA_ECO57</name>
<sequence length="450" mass="48370">MALAMKVISQVEAQRKILEEAVSTALELASGKSDGAEVAVSKTTGISVSTRYGEVENVEFNSDGALGITVYHQNRKGSASSTDLSPQAIARTVQAALDIARYTSPDPCAGVADKELLAFDAPDLDLFHPAEVSPDEAIELAARAEQAALQADKRITNTEGGSFNSHYGVKVFGNSHGMLQGYCSTRHSLSSCVIAEENGDMERDYAYTIGRAMSDLQTPEWVGADCARRTLSRLSPRKLSTMKAPVIFANEVATGLFGHLVGAIAGGSVYRKSTFLLDSLGKQILPDWLTIEEHPHLLKGLASTPFDSEGVRTERRDIIKDGILTQWLLTSYSARKLGLKSTGHAGGIHNWRIAGQGLSFEQMLKEMGTGLVVTELMGQGVSAITGDYSRGAAGFWVENGEIQYPVSEITIAGNLKDMWRNIVTVGNDIETRSNIQCGSVLLPEMKIAGQ</sequence>
<dbReference type="EC" id="3.4.-.-"/>
<dbReference type="EMBL" id="AE005174">
    <property type="protein sequence ID" value="AAG59432.1"/>
    <property type="molecule type" value="Genomic_DNA"/>
</dbReference>
<dbReference type="EMBL" id="BA000007">
    <property type="protein sequence ID" value="BAB38635.1"/>
    <property type="molecule type" value="Genomic_DNA"/>
</dbReference>
<dbReference type="PIR" id="D86121">
    <property type="entry name" value="D86121"/>
</dbReference>
<dbReference type="PIR" id="D91280">
    <property type="entry name" value="D91280"/>
</dbReference>
<dbReference type="RefSeq" id="NP_313239.1">
    <property type="nucleotide sequence ID" value="NC_002695.1"/>
</dbReference>
<dbReference type="RefSeq" id="WP_001162171.1">
    <property type="nucleotide sequence ID" value="NZ_VOAI01000023.1"/>
</dbReference>
<dbReference type="SMR" id="P0AFK1"/>
<dbReference type="STRING" id="155864.Z5845"/>
<dbReference type="GeneID" id="75203543"/>
<dbReference type="GeneID" id="913868"/>
<dbReference type="KEGG" id="ece:Z5845"/>
<dbReference type="KEGG" id="ecs:ECs_5212"/>
<dbReference type="PATRIC" id="fig|386585.9.peg.5448"/>
<dbReference type="eggNOG" id="COG0312">
    <property type="taxonomic scope" value="Bacteria"/>
</dbReference>
<dbReference type="HOGENOM" id="CLU_026425_0_0_6"/>
<dbReference type="OMA" id="GGIYNWT"/>
<dbReference type="Proteomes" id="UP000000558">
    <property type="component" value="Chromosome"/>
</dbReference>
<dbReference type="Proteomes" id="UP000002519">
    <property type="component" value="Chromosome"/>
</dbReference>
<dbReference type="GO" id="GO:0005829">
    <property type="term" value="C:cytosol"/>
    <property type="evidence" value="ECO:0007669"/>
    <property type="project" value="TreeGrafter"/>
</dbReference>
<dbReference type="GO" id="GO:0008237">
    <property type="term" value="F:metallopeptidase activity"/>
    <property type="evidence" value="ECO:0007669"/>
    <property type="project" value="UniProtKB-KW"/>
</dbReference>
<dbReference type="GO" id="GO:0006508">
    <property type="term" value="P:proteolysis"/>
    <property type="evidence" value="ECO:0007669"/>
    <property type="project" value="UniProtKB-KW"/>
</dbReference>
<dbReference type="FunFam" id="3.30.2290.10:FF:000002">
    <property type="entry name" value="Metalloprotease PmbA homolog"/>
    <property type="match status" value="1"/>
</dbReference>
<dbReference type="Gene3D" id="3.30.2290.10">
    <property type="entry name" value="PmbA/TldD superfamily"/>
    <property type="match status" value="1"/>
</dbReference>
<dbReference type="InterPro" id="IPR045569">
    <property type="entry name" value="Metalloprtase-TldD/E_C"/>
</dbReference>
<dbReference type="InterPro" id="IPR045570">
    <property type="entry name" value="Metalloprtase-TldD/E_cen_dom"/>
</dbReference>
<dbReference type="InterPro" id="IPR002510">
    <property type="entry name" value="Metalloprtase-TldD/E_N"/>
</dbReference>
<dbReference type="InterPro" id="IPR047657">
    <property type="entry name" value="PmbA"/>
</dbReference>
<dbReference type="InterPro" id="IPR035068">
    <property type="entry name" value="TldD/PmbA_N"/>
</dbReference>
<dbReference type="InterPro" id="IPR036059">
    <property type="entry name" value="TldD/PmbA_sf"/>
</dbReference>
<dbReference type="NCBIfam" id="NF008268">
    <property type="entry name" value="PRK11040.1"/>
    <property type="match status" value="1"/>
</dbReference>
<dbReference type="PANTHER" id="PTHR43421">
    <property type="entry name" value="METALLOPROTEASE PMBA"/>
    <property type="match status" value="1"/>
</dbReference>
<dbReference type="PANTHER" id="PTHR43421:SF1">
    <property type="entry name" value="METALLOPROTEASE PMBA"/>
    <property type="match status" value="1"/>
</dbReference>
<dbReference type="Pfam" id="PF01523">
    <property type="entry name" value="PmbA_TldD_1st"/>
    <property type="match status" value="1"/>
</dbReference>
<dbReference type="Pfam" id="PF19290">
    <property type="entry name" value="PmbA_TldD_2nd"/>
    <property type="match status" value="1"/>
</dbReference>
<dbReference type="Pfam" id="PF19289">
    <property type="entry name" value="PmbA_TldD_3rd"/>
    <property type="match status" value="1"/>
</dbReference>
<dbReference type="SUPFAM" id="SSF111283">
    <property type="entry name" value="Putative modulator of DNA gyrase, PmbA/TldD"/>
    <property type="match status" value="1"/>
</dbReference>
<protein>
    <recommendedName>
        <fullName>Metalloprotease PmbA</fullName>
        <ecNumber>3.4.-.-</ecNumber>
    </recommendedName>
</protein>
<evidence type="ECO:0000250" key="1"/>
<evidence type="ECO:0000305" key="2"/>
<keyword id="KW-0963">Cytoplasm</keyword>
<keyword id="KW-0378">Hydrolase</keyword>
<keyword id="KW-0482">Metalloprotease</keyword>
<keyword id="KW-0645">Protease</keyword>
<keyword id="KW-1185">Reference proteome</keyword>
<accession>P0AFK1</accession>
<accession>P24231</accession>
<reference key="1">
    <citation type="journal article" date="2001" name="Nature">
        <title>Genome sequence of enterohaemorrhagic Escherichia coli O157:H7.</title>
        <authorList>
            <person name="Perna N.T."/>
            <person name="Plunkett G. III"/>
            <person name="Burland V."/>
            <person name="Mau B."/>
            <person name="Glasner J.D."/>
            <person name="Rose D.J."/>
            <person name="Mayhew G.F."/>
            <person name="Evans P.S."/>
            <person name="Gregor J."/>
            <person name="Kirkpatrick H.A."/>
            <person name="Posfai G."/>
            <person name="Hackett J."/>
            <person name="Klink S."/>
            <person name="Boutin A."/>
            <person name="Shao Y."/>
            <person name="Miller L."/>
            <person name="Grotbeck E.J."/>
            <person name="Davis N.W."/>
            <person name="Lim A."/>
            <person name="Dimalanta E.T."/>
            <person name="Potamousis K."/>
            <person name="Apodaca J."/>
            <person name="Anantharaman T.S."/>
            <person name="Lin J."/>
            <person name="Yen G."/>
            <person name="Schwartz D.C."/>
            <person name="Welch R.A."/>
            <person name="Blattner F.R."/>
        </authorList>
    </citation>
    <scope>NUCLEOTIDE SEQUENCE [LARGE SCALE GENOMIC DNA]</scope>
    <source>
        <strain>O157:H7 / EDL933 / ATCC 700927 / EHEC</strain>
    </source>
</reference>
<reference key="2">
    <citation type="journal article" date="2001" name="DNA Res.">
        <title>Complete genome sequence of enterohemorrhagic Escherichia coli O157:H7 and genomic comparison with a laboratory strain K-12.</title>
        <authorList>
            <person name="Hayashi T."/>
            <person name="Makino K."/>
            <person name="Ohnishi M."/>
            <person name="Kurokawa K."/>
            <person name="Ishii K."/>
            <person name="Yokoyama K."/>
            <person name="Han C.-G."/>
            <person name="Ohtsubo E."/>
            <person name="Nakayama K."/>
            <person name="Murata T."/>
            <person name="Tanaka M."/>
            <person name="Tobe T."/>
            <person name="Iida T."/>
            <person name="Takami H."/>
            <person name="Honda T."/>
            <person name="Sasakawa C."/>
            <person name="Ogasawara N."/>
            <person name="Yasunaga T."/>
            <person name="Kuhara S."/>
            <person name="Shiba T."/>
            <person name="Hattori M."/>
            <person name="Shinagawa H."/>
        </authorList>
    </citation>
    <scope>NUCLEOTIDE SEQUENCE [LARGE SCALE GENOMIC DNA]</scope>
    <source>
        <strain>O157:H7 / Sakai / RIMD 0509952 / EHEC</strain>
    </source>
</reference>
<organism>
    <name type="scientific">Escherichia coli O157:H7</name>
    <dbReference type="NCBI Taxonomy" id="83334"/>
    <lineage>
        <taxon>Bacteria</taxon>
        <taxon>Pseudomonadati</taxon>
        <taxon>Pseudomonadota</taxon>
        <taxon>Gammaproteobacteria</taxon>
        <taxon>Enterobacterales</taxon>
        <taxon>Enterobacteriaceae</taxon>
        <taxon>Escherichia</taxon>
    </lineage>
</organism>
<comment type="function">
    <text evidence="1">Metalloprotease involved in CcdA degradation. Suppresses the inhibitory activity of the carbon storage regulator (CsrA) (By similarity).</text>
</comment>
<comment type="subcellular location">
    <subcellularLocation>
        <location evidence="1">Cytoplasm</location>
    </subcellularLocation>
</comment>
<comment type="similarity">
    <text evidence="2">Belongs to the peptidase U62 family.</text>
</comment>
<gene>
    <name type="primary">pmbA</name>
    <name type="ordered locus">Z5845</name>
    <name type="ordered locus">ECs5212</name>
</gene>
<feature type="chain" id="PRO_0000142352" description="Metalloprotease PmbA">
    <location>
        <begin position="1"/>
        <end position="450"/>
    </location>
</feature>